<organism>
    <name type="scientific">Mus musculus</name>
    <name type="common">Mouse</name>
    <dbReference type="NCBI Taxonomy" id="10090"/>
    <lineage>
        <taxon>Eukaryota</taxon>
        <taxon>Metazoa</taxon>
        <taxon>Chordata</taxon>
        <taxon>Craniata</taxon>
        <taxon>Vertebrata</taxon>
        <taxon>Euteleostomi</taxon>
        <taxon>Mammalia</taxon>
        <taxon>Eutheria</taxon>
        <taxon>Euarchontoglires</taxon>
        <taxon>Glires</taxon>
        <taxon>Rodentia</taxon>
        <taxon>Myomorpha</taxon>
        <taxon>Muroidea</taxon>
        <taxon>Muridae</taxon>
        <taxon>Murinae</taxon>
        <taxon>Mus</taxon>
        <taxon>Mus</taxon>
    </lineage>
</organism>
<accession>P01812</accession>
<sequence length="117" mass="13051">EVKLLESGGPLVQLGGSLKLSCAASGFDFSRYWMSWVRQAPGKGLEWIGEIDPNSSTINYTPSLKDKFIISRNDAKNTLYLQMSKVRSEDTALYYCARSPYYAMNYWGQGTSVTVSS</sequence>
<keyword id="KW-1064">Adaptive immunity</keyword>
<keyword id="KW-0903">Direct protein sequencing</keyword>
<keyword id="KW-1015">Disulfide bond</keyword>
<keyword id="KW-0391">Immunity</keyword>
<keyword id="KW-1280">Immunoglobulin</keyword>
<keyword id="KW-1185">Reference proteome</keyword>
<evidence type="ECO:0000255" key="1">
    <source>
        <dbReference type="PROSITE-ProRule" id="PRU00114"/>
    </source>
</evidence>
<evidence type="ECO:0000269" key="2">
    <source>
    </source>
</evidence>
<evidence type="ECO:0000305" key="3"/>
<name>HVM42_MOUSE</name>
<reference key="1">
    <citation type="journal article" date="1972" name="Eur. J. Biochem.">
        <title>Sequence of amino acids of the NH 2 -terminal region of a mouse-clonal immunoglobulin heavy chain.</title>
        <authorList>
            <person name="Bourgois A."/>
            <person name="Fougereau M."/>
            <person name="de Preval C."/>
        </authorList>
    </citation>
    <scope>PROTEIN SEQUENCE OF 1-104</scope>
</reference>
<reference key="2">
    <citation type="journal article" date="1975" name="Eur. J. Biochem.">
        <title>Determination of the primary structure of a mouse IgG2a immunoglobulin. Amino-acid sequence of the H4 cyanogen-bromide fragment.</title>
        <authorList>
            <person name="Rocca-Serra J."/>
            <person name="Milili M."/>
            <person name="Fougereau M."/>
        </authorList>
    </citation>
    <scope>PROTEIN SEQUENCE OF 105-117</scope>
</reference>
<reference key="3">
    <citation type="journal article" date="1981" name="Proc. Natl. Acad. Sci. U.S.A.">
        <title>Sequences of the joining region genes for immunoglobulin heavy chains and their role in generation of antibody diversity.</title>
        <authorList>
            <person name="Gough N.M."/>
            <person name="Bernard O."/>
        </authorList>
    </citation>
    <scope>NUCLEOTIDE SEQUENCE OF 96-117</scope>
</reference>
<reference key="4">
    <citation type="journal article" date="1970" name="FEBS Lett.">
        <title>Partial amino acid sequence of the variable region of a mouse gammaG2a immunoglobulin heavy chain. Evidence for the existence of a third sub-group of variability for the heavy chain pool.</title>
        <authorList>
            <person name="Bourgois A."/>
            <person name="Fougereau M."/>
        </authorList>
    </citation>
    <scope>DISULFIDE BOND</scope>
</reference>
<dbReference type="PIR" id="A91190">
    <property type="entry name" value="G2MS73"/>
</dbReference>
<dbReference type="SMR" id="P01812"/>
<dbReference type="FunCoup" id="P01812">
    <property type="interactions" value="410"/>
</dbReference>
<dbReference type="jPOST" id="P01812"/>
<dbReference type="InParanoid" id="P01812"/>
<dbReference type="Proteomes" id="UP000000589">
    <property type="component" value="Unplaced"/>
</dbReference>
<dbReference type="RNAct" id="P01812">
    <property type="molecule type" value="protein"/>
</dbReference>
<dbReference type="GO" id="GO:0005576">
    <property type="term" value="C:extracellular region"/>
    <property type="evidence" value="ECO:0007669"/>
    <property type="project" value="UniProtKB-ARBA"/>
</dbReference>
<dbReference type="GO" id="GO:0019814">
    <property type="term" value="C:immunoglobulin complex"/>
    <property type="evidence" value="ECO:0007669"/>
    <property type="project" value="UniProtKB-KW"/>
</dbReference>
<dbReference type="GO" id="GO:0003823">
    <property type="term" value="F:antigen binding"/>
    <property type="evidence" value="ECO:0000318"/>
    <property type="project" value="GO_Central"/>
</dbReference>
<dbReference type="GO" id="GO:0016064">
    <property type="term" value="P:immunoglobulin mediated immune response"/>
    <property type="evidence" value="ECO:0000318"/>
    <property type="project" value="GO_Central"/>
</dbReference>
<dbReference type="CDD" id="cd04981">
    <property type="entry name" value="IgV_H"/>
    <property type="match status" value="1"/>
</dbReference>
<dbReference type="FunFam" id="2.60.40.10:FF:001259">
    <property type="entry name" value="Immunoglobulin heavy variable 13-2"/>
    <property type="match status" value="1"/>
</dbReference>
<dbReference type="Gene3D" id="2.60.40.10">
    <property type="entry name" value="Immunoglobulins"/>
    <property type="match status" value="1"/>
</dbReference>
<dbReference type="InterPro" id="IPR007110">
    <property type="entry name" value="Ig-like_dom"/>
</dbReference>
<dbReference type="InterPro" id="IPR036179">
    <property type="entry name" value="Ig-like_dom_sf"/>
</dbReference>
<dbReference type="InterPro" id="IPR013783">
    <property type="entry name" value="Ig-like_fold"/>
</dbReference>
<dbReference type="InterPro" id="IPR003599">
    <property type="entry name" value="Ig_sub"/>
</dbReference>
<dbReference type="InterPro" id="IPR013106">
    <property type="entry name" value="Ig_V-set"/>
</dbReference>
<dbReference type="InterPro" id="IPR050199">
    <property type="entry name" value="IgHV"/>
</dbReference>
<dbReference type="PANTHER" id="PTHR23266">
    <property type="entry name" value="IMMUNOGLOBULIN HEAVY CHAIN"/>
    <property type="match status" value="1"/>
</dbReference>
<dbReference type="Pfam" id="PF07686">
    <property type="entry name" value="V-set"/>
    <property type="match status" value="1"/>
</dbReference>
<dbReference type="SMART" id="SM00409">
    <property type="entry name" value="IG"/>
    <property type="match status" value="1"/>
</dbReference>
<dbReference type="SMART" id="SM00406">
    <property type="entry name" value="IGv"/>
    <property type="match status" value="1"/>
</dbReference>
<dbReference type="SUPFAM" id="SSF48726">
    <property type="entry name" value="Immunoglobulin"/>
    <property type="match status" value="1"/>
</dbReference>
<dbReference type="PROSITE" id="PS50835">
    <property type="entry name" value="IG_LIKE"/>
    <property type="match status" value="1"/>
</dbReference>
<protein>
    <recommendedName>
        <fullName>Ig heavy chain V region MOPC 173</fullName>
    </recommendedName>
</protein>
<proteinExistence type="evidence at protein level"/>
<comment type="miscellaneous">
    <text>This gamma-2a chain was isolated from a myeloma protein.</text>
</comment>
<feature type="chain" id="PRO_0000059895" description="Ig heavy chain V region MOPC 173">
    <location>
        <begin position="1"/>
        <end position="117" status="greater than"/>
    </location>
</feature>
<feature type="domain" description="Ig-like">
    <location>
        <begin position="1"/>
        <end position="116"/>
    </location>
</feature>
<feature type="disulfide bond" evidence="1 2">
    <location>
        <begin position="22"/>
        <end position="96"/>
    </location>
</feature>
<feature type="sequence conflict" description="In Ref. 2; AA sequence." evidence="3" ref="2">
    <original>N</original>
    <variation>D</variation>
    <location>
        <position position="105"/>
    </location>
</feature>
<feature type="non-terminal residue">
    <location>
        <position position="117"/>
    </location>
</feature>